<dbReference type="EC" id="3.1.1.61" evidence="1"/>
<dbReference type="EC" id="3.5.1.44" evidence="1"/>
<dbReference type="EMBL" id="CP000285">
    <property type="protein sequence ID" value="ABE59371.1"/>
    <property type="molecule type" value="Genomic_DNA"/>
</dbReference>
<dbReference type="RefSeq" id="WP_011507317.1">
    <property type="nucleotide sequence ID" value="NC_007963.1"/>
</dbReference>
<dbReference type="SMR" id="Q1QVY7"/>
<dbReference type="STRING" id="290398.Csal_2020"/>
<dbReference type="GeneID" id="95334732"/>
<dbReference type="KEGG" id="csa:Csal_2020"/>
<dbReference type="eggNOG" id="COG2201">
    <property type="taxonomic scope" value="Bacteria"/>
</dbReference>
<dbReference type="HOGENOM" id="CLU_000445_51_0_6"/>
<dbReference type="OrthoDB" id="9793421at2"/>
<dbReference type="Proteomes" id="UP000000239">
    <property type="component" value="Chromosome"/>
</dbReference>
<dbReference type="GO" id="GO:0005737">
    <property type="term" value="C:cytoplasm"/>
    <property type="evidence" value="ECO:0007669"/>
    <property type="project" value="UniProtKB-SubCell"/>
</dbReference>
<dbReference type="GO" id="GO:0000156">
    <property type="term" value="F:phosphorelay response regulator activity"/>
    <property type="evidence" value="ECO:0007669"/>
    <property type="project" value="InterPro"/>
</dbReference>
<dbReference type="GO" id="GO:0008984">
    <property type="term" value="F:protein-glutamate methylesterase activity"/>
    <property type="evidence" value="ECO:0007669"/>
    <property type="project" value="UniProtKB-UniRule"/>
</dbReference>
<dbReference type="GO" id="GO:0050568">
    <property type="term" value="F:protein-glutamine glutaminase activity"/>
    <property type="evidence" value="ECO:0007669"/>
    <property type="project" value="UniProtKB-UniRule"/>
</dbReference>
<dbReference type="GO" id="GO:0006935">
    <property type="term" value="P:chemotaxis"/>
    <property type="evidence" value="ECO:0007669"/>
    <property type="project" value="UniProtKB-UniRule"/>
</dbReference>
<dbReference type="CDD" id="cd16432">
    <property type="entry name" value="CheB_Rec"/>
    <property type="match status" value="1"/>
</dbReference>
<dbReference type="CDD" id="cd17541">
    <property type="entry name" value="REC_CheB-like"/>
    <property type="match status" value="1"/>
</dbReference>
<dbReference type="FunFam" id="3.40.50.180:FF:000001">
    <property type="entry name" value="Protein-glutamate methylesterase/protein-glutamine glutaminase"/>
    <property type="match status" value="1"/>
</dbReference>
<dbReference type="FunFam" id="3.40.50.2300:FF:000060">
    <property type="entry name" value="Protein-glutamate methylesterase/protein-glutamine glutaminase"/>
    <property type="match status" value="1"/>
</dbReference>
<dbReference type="Gene3D" id="3.40.50.2300">
    <property type="match status" value="1"/>
</dbReference>
<dbReference type="Gene3D" id="3.40.50.180">
    <property type="entry name" value="Methylesterase CheB, C-terminal domain"/>
    <property type="match status" value="1"/>
</dbReference>
<dbReference type="HAMAP" id="MF_00099">
    <property type="entry name" value="CheB_chemtxs"/>
    <property type="match status" value="1"/>
</dbReference>
<dbReference type="InterPro" id="IPR008248">
    <property type="entry name" value="CheB-like"/>
</dbReference>
<dbReference type="InterPro" id="IPR035909">
    <property type="entry name" value="CheB_C"/>
</dbReference>
<dbReference type="InterPro" id="IPR011006">
    <property type="entry name" value="CheY-like_superfamily"/>
</dbReference>
<dbReference type="InterPro" id="IPR000673">
    <property type="entry name" value="Sig_transdc_resp-reg_Me-estase"/>
</dbReference>
<dbReference type="InterPro" id="IPR001789">
    <property type="entry name" value="Sig_transdc_resp-reg_receiver"/>
</dbReference>
<dbReference type="NCBIfam" id="NF001965">
    <property type="entry name" value="PRK00742.1"/>
    <property type="match status" value="1"/>
</dbReference>
<dbReference type="NCBIfam" id="NF009206">
    <property type="entry name" value="PRK12555.1"/>
    <property type="match status" value="1"/>
</dbReference>
<dbReference type="PANTHER" id="PTHR42872">
    <property type="entry name" value="PROTEIN-GLUTAMATE METHYLESTERASE/PROTEIN-GLUTAMINE GLUTAMINASE"/>
    <property type="match status" value="1"/>
</dbReference>
<dbReference type="PANTHER" id="PTHR42872:SF6">
    <property type="entry name" value="PROTEIN-GLUTAMATE METHYLESTERASE_PROTEIN-GLUTAMINE GLUTAMINASE"/>
    <property type="match status" value="1"/>
</dbReference>
<dbReference type="Pfam" id="PF01339">
    <property type="entry name" value="CheB_methylest"/>
    <property type="match status" value="1"/>
</dbReference>
<dbReference type="Pfam" id="PF00072">
    <property type="entry name" value="Response_reg"/>
    <property type="match status" value="1"/>
</dbReference>
<dbReference type="PIRSF" id="PIRSF000876">
    <property type="entry name" value="RR_chemtxs_CheB"/>
    <property type="match status" value="1"/>
</dbReference>
<dbReference type="SMART" id="SM00448">
    <property type="entry name" value="REC"/>
    <property type="match status" value="1"/>
</dbReference>
<dbReference type="SUPFAM" id="SSF52172">
    <property type="entry name" value="CheY-like"/>
    <property type="match status" value="1"/>
</dbReference>
<dbReference type="SUPFAM" id="SSF52738">
    <property type="entry name" value="Methylesterase CheB, C-terminal domain"/>
    <property type="match status" value="1"/>
</dbReference>
<dbReference type="PROSITE" id="PS50122">
    <property type="entry name" value="CHEB"/>
    <property type="match status" value="1"/>
</dbReference>
<dbReference type="PROSITE" id="PS50110">
    <property type="entry name" value="RESPONSE_REGULATORY"/>
    <property type="match status" value="1"/>
</dbReference>
<feature type="chain" id="PRO_0000264272" description="Protein-glutamate methylesterase/protein-glutamine glutaminase">
    <location>
        <begin position="1"/>
        <end position="354"/>
    </location>
</feature>
<feature type="domain" description="Response regulatory" evidence="1">
    <location>
        <begin position="7"/>
        <end position="124"/>
    </location>
</feature>
<feature type="domain" description="CheB-type methylesterase" evidence="1">
    <location>
        <begin position="156"/>
        <end position="348"/>
    </location>
</feature>
<feature type="active site" evidence="1">
    <location>
        <position position="168"/>
    </location>
</feature>
<feature type="active site" evidence="1">
    <location>
        <position position="194"/>
    </location>
</feature>
<feature type="active site" evidence="1">
    <location>
        <position position="290"/>
    </location>
</feature>
<feature type="modified residue" description="4-aspartylphosphate" evidence="1">
    <location>
        <position position="58"/>
    </location>
</feature>
<proteinExistence type="inferred from homology"/>
<comment type="function">
    <text evidence="1">Involved in chemotaxis. Part of a chemotaxis signal transduction system that modulates chemotaxis in response to various stimuli. Catalyzes the demethylation of specific methylglutamate residues introduced into the chemoreceptors (methyl-accepting chemotaxis proteins or MCP) by CheR. Also mediates the irreversible deamidation of specific glutamine residues to glutamic acid.</text>
</comment>
<comment type="catalytic activity">
    <reaction evidence="1">
        <text>[protein]-L-glutamate 5-O-methyl ester + H2O = L-glutamyl-[protein] + methanol + H(+)</text>
        <dbReference type="Rhea" id="RHEA:23236"/>
        <dbReference type="Rhea" id="RHEA-COMP:10208"/>
        <dbReference type="Rhea" id="RHEA-COMP:10311"/>
        <dbReference type="ChEBI" id="CHEBI:15377"/>
        <dbReference type="ChEBI" id="CHEBI:15378"/>
        <dbReference type="ChEBI" id="CHEBI:17790"/>
        <dbReference type="ChEBI" id="CHEBI:29973"/>
        <dbReference type="ChEBI" id="CHEBI:82795"/>
        <dbReference type="EC" id="3.1.1.61"/>
    </reaction>
</comment>
<comment type="catalytic activity">
    <reaction evidence="1">
        <text>L-glutaminyl-[protein] + H2O = L-glutamyl-[protein] + NH4(+)</text>
        <dbReference type="Rhea" id="RHEA:16441"/>
        <dbReference type="Rhea" id="RHEA-COMP:10207"/>
        <dbReference type="Rhea" id="RHEA-COMP:10208"/>
        <dbReference type="ChEBI" id="CHEBI:15377"/>
        <dbReference type="ChEBI" id="CHEBI:28938"/>
        <dbReference type="ChEBI" id="CHEBI:29973"/>
        <dbReference type="ChEBI" id="CHEBI:30011"/>
        <dbReference type="EC" id="3.5.1.44"/>
    </reaction>
</comment>
<comment type="subcellular location">
    <subcellularLocation>
        <location evidence="1">Cytoplasm</location>
    </subcellularLocation>
</comment>
<comment type="domain">
    <text evidence="1">Contains a C-terminal catalytic domain, and an N-terminal region which modulates catalytic activity.</text>
</comment>
<comment type="PTM">
    <text evidence="1">Phosphorylated by CheA. Phosphorylation of the N-terminal regulatory domain activates the methylesterase activity.</text>
</comment>
<comment type="similarity">
    <text evidence="1">Belongs to the CheB family.</text>
</comment>
<name>CHEB_CHRSD</name>
<sequence>MTSNKIKVLCVDDSALIRDLMSKIIDSQPDMEVVATAPDPLVARDLIKRTNPDVLTLDVEMPRMDGLDFLERLMRLRPMPVLMVSSLTQKGSEITLRALELGAVDFVAKPEMGIREGMLEYTEMIADMIRAAARSRPRAVAKQPPAKDKAPLKAPLLSSEKVIIIGASTGGTEAIRHVLEPLPANSPAVLITQHMPGGFTKSFAERLDKLCRISVKEAVDGERVLPGHAYIAPGDWHMKLARSGANYVIRLDDAPPVNRHRPSVDVLFHSAAQSAGRNAIGVILTGMGRDGAAGLLEMRQAGSYTLAQDEESCVVFGMPREAIVAGAAIDTIALSEIPAALMKRAEASGRAQRV</sequence>
<protein>
    <recommendedName>
        <fullName evidence="1">Protein-glutamate methylesterase/protein-glutamine glutaminase</fullName>
        <ecNumber evidence="1">3.1.1.61</ecNumber>
        <ecNumber evidence="1">3.5.1.44</ecNumber>
    </recommendedName>
</protein>
<evidence type="ECO:0000255" key="1">
    <source>
        <dbReference type="HAMAP-Rule" id="MF_00099"/>
    </source>
</evidence>
<gene>
    <name evidence="1" type="primary">cheB</name>
    <name type="ordered locus">Csal_2020</name>
</gene>
<accession>Q1QVY7</accession>
<keyword id="KW-0145">Chemotaxis</keyword>
<keyword id="KW-0963">Cytoplasm</keyword>
<keyword id="KW-0378">Hydrolase</keyword>
<keyword id="KW-0597">Phosphoprotein</keyword>
<keyword id="KW-1185">Reference proteome</keyword>
<reference key="1">
    <citation type="journal article" date="2011" name="Stand. Genomic Sci.">
        <title>Complete genome sequence of the halophilic and highly halotolerant Chromohalobacter salexigens type strain (1H11(T)).</title>
        <authorList>
            <person name="Copeland A."/>
            <person name="O'Connor K."/>
            <person name="Lucas S."/>
            <person name="Lapidus A."/>
            <person name="Berry K.W."/>
            <person name="Detter J.C."/>
            <person name="Del Rio T.G."/>
            <person name="Hammon N."/>
            <person name="Dalin E."/>
            <person name="Tice H."/>
            <person name="Pitluck S."/>
            <person name="Bruce D."/>
            <person name="Goodwin L."/>
            <person name="Han C."/>
            <person name="Tapia R."/>
            <person name="Saunders E."/>
            <person name="Schmutz J."/>
            <person name="Brettin T."/>
            <person name="Larimer F."/>
            <person name="Land M."/>
            <person name="Hauser L."/>
            <person name="Vargas C."/>
            <person name="Nieto J.J."/>
            <person name="Kyrpides N.C."/>
            <person name="Ivanova N."/>
            <person name="Goker M."/>
            <person name="Klenk H.P."/>
            <person name="Csonka L.N."/>
            <person name="Woyke T."/>
        </authorList>
    </citation>
    <scope>NUCLEOTIDE SEQUENCE [LARGE SCALE GENOMIC DNA]</scope>
    <source>
        <strain>ATCC BAA-138 / DSM 3043 / CIP 106854 / NCIMB 13768 / 1H11</strain>
    </source>
</reference>
<organism>
    <name type="scientific">Chromohalobacter salexigens (strain ATCC BAA-138 / DSM 3043 / CIP 106854 / NCIMB 13768 / 1H11)</name>
    <dbReference type="NCBI Taxonomy" id="290398"/>
    <lineage>
        <taxon>Bacteria</taxon>
        <taxon>Pseudomonadati</taxon>
        <taxon>Pseudomonadota</taxon>
        <taxon>Gammaproteobacteria</taxon>
        <taxon>Oceanospirillales</taxon>
        <taxon>Halomonadaceae</taxon>
        <taxon>Chromohalobacter</taxon>
    </lineage>
</organism>